<dbReference type="EC" id="7.1.1.2" evidence="1"/>
<dbReference type="EMBL" id="D38116">
    <property type="protein sequence ID" value="BAA85299.1"/>
    <property type="molecule type" value="Genomic_DNA"/>
</dbReference>
<dbReference type="RefSeq" id="NP_008206.1">
    <property type="nucleotide sequence ID" value="NC_001644.1"/>
</dbReference>
<dbReference type="SMR" id="Q9T9W7"/>
<dbReference type="STRING" id="9597.ENSPPAP00000000008"/>
<dbReference type="Ensembl" id="ENSPPAT00000000025.1">
    <property type="protein sequence ID" value="ENSPPAP00000000008.1"/>
    <property type="gene ID" value="ENSPPAG00000000025.1"/>
</dbReference>
<dbReference type="GeneID" id="807879"/>
<dbReference type="KEGG" id="pps:807879"/>
<dbReference type="CTD" id="4537"/>
<dbReference type="GeneTree" id="ENSGT00390000011605"/>
<dbReference type="OMA" id="GPRRYNR"/>
<dbReference type="Proteomes" id="UP000240080">
    <property type="component" value="Mitochondrion"/>
</dbReference>
<dbReference type="Bgee" id="ENSPPAG00000000025">
    <property type="expression patterns" value="Expressed in heart and 6 other cell types or tissues"/>
</dbReference>
<dbReference type="GO" id="GO:0005743">
    <property type="term" value="C:mitochondrial inner membrane"/>
    <property type="evidence" value="ECO:0000250"/>
    <property type="project" value="UniProtKB"/>
</dbReference>
<dbReference type="GO" id="GO:0045271">
    <property type="term" value="C:respiratory chain complex I"/>
    <property type="evidence" value="ECO:0007669"/>
    <property type="project" value="Ensembl"/>
</dbReference>
<dbReference type="GO" id="GO:0008137">
    <property type="term" value="F:NADH dehydrogenase (ubiquinone) activity"/>
    <property type="evidence" value="ECO:0000250"/>
    <property type="project" value="UniProtKB"/>
</dbReference>
<dbReference type="GO" id="GO:0006120">
    <property type="term" value="P:mitochondrial electron transport, NADH to ubiquinone"/>
    <property type="evidence" value="ECO:0000250"/>
    <property type="project" value="UniProtKB"/>
</dbReference>
<dbReference type="FunFam" id="1.20.58.1610:FF:000004">
    <property type="entry name" value="NADH-quinone oxidoreductase subunit A"/>
    <property type="match status" value="1"/>
</dbReference>
<dbReference type="Gene3D" id="1.20.58.1610">
    <property type="entry name" value="NADH:ubiquinone/plastoquinone oxidoreductase, chain 3"/>
    <property type="match status" value="1"/>
</dbReference>
<dbReference type="InterPro" id="IPR000440">
    <property type="entry name" value="NADH_UbQ/plastoQ_OxRdtase_su3"/>
</dbReference>
<dbReference type="InterPro" id="IPR038430">
    <property type="entry name" value="NDAH_ubi_oxred_su3_sf"/>
</dbReference>
<dbReference type="PANTHER" id="PTHR11058">
    <property type="entry name" value="NADH-UBIQUINONE OXIDOREDUCTASE CHAIN 3"/>
    <property type="match status" value="1"/>
</dbReference>
<dbReference type="PANTHER" id="PTHR11058:SF9">
    <property type="entry name" value="NADH-UBIQUINONE OXIDOREDUCTASE CHAIN 3"/>
    <property type="match status" value="1"/>
</dbReference>
<dbReference type="Pfam" id="PF00507">
    <property type="entry name" value="Oxidored_q4"/>
    <property type="match status" value="1"/>
</dbReference>
<keyword id="KW-0249">Electron transport</keyword>
<keyword id="KW-0472">Membrane</keyword>
<keyword id="KW-0496">Mitochondrion</keyword>
<keyword id="KW-0999">Mitochondrion inner membrane</keyword>
<keyword id="KW-0520">NAD</keyword>
<keyword id="KW-1185">Reference proteome</keyword>
<keyword id="KW-0679">Respiratory chain</keyword>
<keyword id="KW-1278">Translocase</keyword>
<keyword id="KW-0812">Transmembrane</keyword>
<keyword id="KW-1133">Transmembrane helix</keyword>
<keyword id="KW-0813">Transport</keyword>
<keyword id="KW-0830">Ubiquinone</keyword>
<gene>
    <name evidence="1" type="primary">MT-ND3</name>
    <name type="synonym">MTND3</name>
    <name type="synonym">NADH3</name>
    <name type="synonym">ND3</name>
</gene>
<comment type="function">
    <text evidence="1">Core subunit of the mitochondrial membrane respiratory chain NADH dehydrogenase (Complex I) which catalyzes electron transfer from NADH through the respiratory chain, using ubiquinone as an electron acceptor. Essential for the catalytic activity of complex I.</text>
</comment>
<comment type="catalytic activity">
    <reaction evidence="1">
        <text>a ubiquinone + NADH + 5 H(+)(in) = a ubiquinol + NAD(+) + 4 H(+)(out)</text>
        <dbReference type="Rhea" id="RHEA:29091"/>
        <dbReference type="Rhea" id="RHEA-COMP:9565"/>
        <dbReference type="Rhea" id="RHEA-COMP:9566"/>
        <dbReference type="ChEBI" id="CHEBI:15378"/>
        <dbReference type="ChEBI" id="CHEBI:16389"/>
        <dbReference type="ChEBI" id="CHEBI:17976"/>
        <dbReference type="ChEBI" id="CHEBI:57540"/>
        <dbReference type="ChEBI" id="CHEBI:57945"/>
        <dbReference type="EC" id="7.1.1.2"/>
    </reaction>
</comment>
<comment type="subunit">
    <text evidence="1">Core subunit of respiratory chain NADH dehydrogenase (Complex I) which is composed of 45 different subunits. Interacts with TMEM186. Interacts with TMEM242 (By similarity).</text>
</comment>
<comment type="subcellular location">
    <subcellularLocation>
        <location evidence="2">Mitochondrion inner membrane</location>
        <topology evidence="3">Multi-pass membrane protein</topology>
    </subcellularLocation>
</comment>
<comment type="similarity">
    <text evidence="4">Belongs to the complex I subunit 3 family.</text>
</comment>
<accession>Q9T9W7</accession>
<organism>
    <name type="scientific">Pan paniscus</name>
    <name type="common">Pygmy chimpanzee</name>
    <name type="synonym">Bonobo</name>
    <dbReference type="NCBI Taxonomy" id="9597"/>
    <lineage>
        <taxon>Eukaryota</taxon>
        <taxon>Metazoa</taxon>
        <taxon>Chordata</taxon>
        <taxon>Craniata</taxon>
        <taxon>Vertebrata</taxon>
        <taxon>Euteleostomi</taxon>
        <taxon>Mammalia</taxon>
        <taxon>Eutheria</taxon>
        <taxon>Euarchontoglires</taxon>
        <taxon>Primates</taxon>
        <taxon>Haplorrhini</taxon>
        <taxon>Catarrhini</taxon>
        <taxon>Hominidae</taxon>
        <taxon>Pan</taxon>
    </lineage>
</organism>
<protein>
    <recommendedName>
        <fullName evidence="1">NADH-ubiquinone oxidoreductase chain 3</fullName>
        <ecNumber evidence="1">7.1.1.2</ecNumber>
    </recommendedName>
    <alternativeName>
        <fullName>NADH dehydrogenase subunit 3</fullName>
    </alternativeName>
</protein>
<feature type="chain" id="PRO_0000117787" description="NADH-ubiquinone oxidoreductase chain 3">
    <location>
        <begin position="1"/>
        <end position="115"/>
    </location>
</feature>
<feature type="transmembrane region" description="Helical" evidence="3">
    <location>
        <begin position="3"/>
        <end position="23"/>
    </location>
</feature>
<feature type="transmembrane region" description="Helical" evidence="3">
    <location>
        <begin position="55"/>
        <end position="75"/>
    </location>
</feature>
<feature type="transmembrane region" description="Helical" evidence="3">
    <location>
        <begin position="84"/>
        <end position="104"/>
    </location>
</feature>
<evidence type="ECO:0000250" key="1">
    <source>
        <dbReference type="UniProtKB" id="P03897"/>
    </source>
</evidence>
<evidence type="ECO:0000250" key="2">
    <source>
        <dbReference type="UniProtKB" id="P03898"/>
    </source>
</evidence>
<evidence type="ECO:0000255" key="3"/>
<evidence type="ECO:0000305" key="4"/>
<name>NU3M_PANPA</name>
<sequence>MNFVLILMTNTLLALLLMIITFWLPQLNSYMEKSNPYECGFDPMSPARVPFSMKFFLVAITFLLFDLEIALLLPLPWALQTANLPLMVMSSLLLITILALSLAYEWLQKGLDWAE</sequence>
<geneLocation type="mitochondrion"/>
<reference key="1">
    <citation type="journal article" date="1995" name="Proc. Natl. Acad. Sci. U.S.A.">
        <title>Recent African origin of modern humans revealed by complete sequences of hominoid mitochondrial DNAs.</title>
        <authorList>
            <person name="Horai S."/>
            <person name="Hayasaka K."/>
            <person name="Kondo R."/>
            <person name="Tsugane K."/>
            <person name="Takahata N."/>
        </authorList>
    </citation>
    <scope>NUCLEOTIDE SEQUENCE [GENOMIC DNA]</scope>
</reference>
<proteinExistence type="inferred from homology"/>